<protein>
    <recommendedName>
        <fullName evidence="2">Large ribosomal subunit protein uL23c</fullName>
    </recommendedName>
    <alternativeName>
        <fullName>50S ribosomal protein L23, chloroplastic</fullName>
    </alternativeName>
</protein>
<organism>
    <name type="scientific">Psilotum nudum</name>
    <name type="common">Whisk fern</name>
    <name type="synonym">Lycopodium nudum</name>
    <dbReference type="NCBI Taxonomy" id="3240"/>
    <lineage>
        <taxon>Eukaryota</taxon>
        <taxon>Viridiplantae</taxon>
        <taxon>Streptophyta</taxon>
        <taxon>Embryophyta</taxon>
        <taxon>Tracheophyta</taxon>
        <taxon>Polypodiopsida</taxon>
        <taxon>Ophioglossidae</taxon>
        <taxon>Psilotales</taxon>
        <taxon>Psilotaceae</taxon>
        <taxon>Psilotum</taxon>
    </lineage>
</organism>
<reference key="1">
    <citation type="journal article" date="2004" name="Mol. Biol. Evol.">
        <title>Chloroplast phylogeny indicates that bryophytes are monophyletic.</title>
        <authorList>
            <person name="Nishiyama T."/>
            <person name="Wolf P.G."/>
            <person name="Kugita M."/>
            <person name="Sinclair R.B."/>
            <person name="Sugita M."/>
            <person name="Sugiura C."/>
            <person name="Wakasugi T."/>
            <person name="Yamada K."/>
            <person name="Yoshinaga K."/>
            <person name="Yamaguchi K."/>
            <person name="Ueda K."/>
            <person name="Hasebe M."/>
        </authorList>
    </citation>
    <scope>NUCLEOTIDE SEQUENCE [LARGE SCALE GENOMIC DNA]</scope>
    <source>
        <strain>Kingyoku</strain>
    </source>
</reference>
<comment type="function">
    <text evidence="1">Binds to 23S rRNA.</text>
</comment>
<comment type="subunit">
    <text evidence="1">Part of the 50S ribosomal subunit.</text>
</comment>
<comment type="subcellular location">
    <subcellularLocation>
        <location>Plastid</location>
        <location>Chloroplast</location>
    </subcellularLocation>
</comment>
<comment type="similarity">
    <text evidence="2">Belongs to the universal ribosomal protein uL23 family.</text>
</comment>
<proteinExistence type="inferred from homology"/>
<dbReference type="EMBL" id="AP004638">
    <property type="protein sequence ID" value="BAB84259.1"/>
    <property type="molecule type" value="Genomic_DNA"/>
</dbReference>
<dbReference type="RefSeq" id="NP_569671.1">
    <property type="nucleotide sequence ID" value="NC_003386.1"/>
</dbReference>
<dbReference type="SMR" id="Q8WHY0"/>
<dbReference type="GeneID" id="2545161"/>
<dbReference type="GO" id="GO:0009507">
    <property type="term" value="C:chloroplast"/>
    <property type="evidence" value="ECO:0007669"/>
    <property type="project" value="UniProtKB-SubCell"/>
</dbReference>
<dbReference type="GO" id="GO:1990904">
    <property type="term" value="C:ribonucleoprotein complex"/>
    <property type="evidence" value="ECO:0007669"/>
    <property type="project" value="UniProtKB-KW"/>
</dbReference>
<dbReference type="GO" id="GO:0005840">
    <property type="term" value="C:ribosome"/>
    <property type="evidence" value="ECO:0007669"/>
    <property type="project" value="UniProtKB-KW"/>
</dbReference>
<dbReference type="GO" id="GO:0019843">
    <property type="term" value="F:rRNA binding"/>
    <property type="evidence" value="ECO:0007669"/>
    <property type="project" value="UniProtKB-UniRule"/>
</dbReference>
<dbReference type="GO" id="GO:0003735">
    <property type="term" value="F:structural constituent of ribosome"/>
    <property type="evidence" value="ECO:0007669"/>
    <property type="project" value="InterPro"/>
</dbReference>
<dbReference type="GO" id="GO:0006412">
    <property type="term" value="P:translation"/>
    <property type="evidence" value="ECO:0007669"/>
    <property type="project" value="UniProtKB-UniRule"/>
</dbReference>
<dbReference type="Gene3D" id="3.30.70.330">
    <property type="match status" value="1"/>
</dbReference>
<dbReference type="HAMAP" id="MF_01369_B">
    <property type="entry name" value="Ribosomal_uL23_B"/>
    <property type="match status" value="1"/>
</dbReference>
<dbReference type="InterPro" id="IPR012677">
    <property type="entry name" value="Nucleotide-bd_a/b_plait_sf"/>
</dbReference>
<dbReference type="InterPro" id="IPR013025">
    <property type="entry name" value="Ribosomal_uL23-like"/>
</dbReference>
<dbReference type="InterPro" id="IPR012678">
    <property type="entry name" value="Ribosomal_uL23/eL15/eS24_sf"/>
</dbReference>
<dbReference type="InterPro" id="IPR001014">
    <property type="entry name" value="Ribosomal_uL23_CS"/>
</dbReference>
<dbReference type="PANTHER" id="PTHR11620">
    <property type="entry name" value="60S RIBOSOMAL PROTEIN L23A"/>
    <property type="match status" value="1"/>
</dbReference>
<dbReference type="Pfam" id="PF00276">
    <property type="entry name" value="Ribosomal_L23"/>
    <property type="match status" value="1"/>
</dbReference>
<dbReference type="SUPFAM" id="SSF54189">
    <property type="entry name" value="Ribosomal proteins S24e, L23 and L15e"/>
    <property type="match status" value="1"/>
</dbReference>
<dbReference type="PROSITE" id="PS00050">
    <property type="entry name" value="RIBOSOMAL_L23"/>
    <property type="match status" value="1"/>
</dbReference>
<evidence type="ECO:0000250" key="1"/>
<evidence type="ECO:0000305" key="2"/>
<geneLocation type="chloroplast"/>
<name>RK23_PSINU</name>
<feature type="chain" id="PRO_0000272929" description="Large ribosomal subunit protein uL23c">
    <location>
        <begin position="1"/>
        <end position="90"/>
    </location>
</feature>
<sequence length="90" mass="10812">MNEIKNQIITEKTIRLLQKNQYTFNVDSKLTKTKIKDWIERFFDVKVKSINSLRSPRKKSQKRLPQTSLNDKRMIITLKPEYSIPLFINE</sequence>
<accession>Q8WHY0</accession>
<keyword id="KW-0150">Chloroplast</keyword>
<keyword id="KW-0934">Plastid</keyword>
<keyword id="KW-0687">Ribonucleoprotein</keyword>
<keyword id="KW-0689">Ribosomal protein</keyword>
<keyword id="KW-0694">RNA-binding</keyword>
<keyword id="KW-0699">rRNA-binding</keyword>
<gene>
    <name type="primary">rpl23</name>
</gene>